<dbReference type="EC" id="2.3.1.-" evidence="9"/>
<dbReference type="EMBL" id="FR718878">
    <property type="protein sequence ID" value="CBX87032.1"/>
    <property type="molecule type" value="Genomic_DNA"/>
</dbReference>
<dbReference type="SMR" id="G0LET7"/>
<dbReference type="GO" id="GO:0004312">
    <property type="term" value="F:fatty acid synthase activity"/>
    <property type="evidence" value="ECO:0007669"/>
    <property type="project" value="TreeGrafter"/>
</dbReference>
<dbReference type="GO" id="GO:0016491">
    <property type="term" value="F:oxidoreductase activity"/>
    <property type="evidence" value="ECO:0007669"/>
    <property type="project" value="UniProtKB-KW"/>
</dbReference>
<dbReference type="GO" id="GO:0006633">
    <property type="term" value="P:fatty acid biosynthetic process"/>
    <property type="evidence" value="ECO:0007669"/>
    <property type="project" value="TreeGrafter"/>
</dbReference>
<dbReference type="GO" id="GO:0044550">
    <property type="term" value="P:secondary metabolite biosynthetic process"/>
    <property type="evidence" value="ECO:0007669"/>
    <property type="project" value="TreeGrafter"/>
</dbReference>
<dbReference type="CDD" id="cd05195">
    <property type="entry name" value="enoyl_red"/>
    <property type="match status" value="1"/>
</dbReference>
<dbReference type="CDD" id="cd00833">
    <property type="entry name" value="PKS"/>
    <property type="match status" value="1"/>
</dbReference>
<dbReference type="FunFam" id="3.40.50.720:FF:000209">
    <property type="entry name" value="Polyketide synthase Pks12"/>
    <property type="match status" value="1"/>
</dbReference>
<dbReference type="Gene3D" id="3.40.47.10">
    <property type="match status" value="1"/>
</dbReference>
<dbReference type="Gene3D" id="3.40.366.10">
    <property type="entry name" value="Malonyl-Coenzyme A Acyl Carrier Protein, domain 2"/>
    <property type="match status" value="1"/>
</dbReference>
<dbReference type="Gene3D" id="3.90.180.10">
    <property type="entry name" value="Medium-chain alcohol dehydrogenases, catalytic domain"/>
    <property type="match status" value="1"/>
</dbReference>
<dbReference type="Gene3D" id="3.40.50.720">
    <property type="entry name" value="NAD(P)-binding Rossmann-like Domain"/>
    <property type="match status" value="2"/>
</dbReference>
<dbReference type="Gene3D" id="3.10.129.110">
    <property type="entry name" value="Polyketide synthase dehydratase"/>
    <property type="match status" value="1"/>
</dbReference>
<dbReference type="InterPro" id="IPR001227">
    <property type="entry name" value="Ac_transferase_dom_sf"/>
</dbReference>
<dbReference type="InterPro" id="IPR036736">
    <property type="entry name" value="ACP-like_sf"/>
</dbReference>
<dbReference type="InterPro" id="IPR014043">
    <property type="entry name" value="Acyl_transferase_dom"/>
</dbReference>
<dbReference type="InterPro" id="IPR016035">
    <property type="entry name" value="Acyl_Trfase/lysoPLipase"/>
</dbReference>
<dbReference type="InterPro" id="IPR013149">
    <property type="entry name" value="ADH-like_C"/>
</dbReference>
<dbReference type="InterPro" id="IPR013154">
    <property type="entry name" value="ADH-like_N"/>
</dbReference>
<dbReference type="InterPro" id="IPR011032">
    <property type="entry name" value="GroES-like_sf"/>
</dbReference>
<dbReference type="InterPro" id="IPR014031">
    <property type="entry name" value="Ketoacyl_synth_C"/>
</dbReference>
<dbReference type="InterPro" id="IPR014030">
    <property type="entry name" value="Ketoacyl_synth_N"/>
</dbReference>
<dbReference type="InterPro" id="IPR016036">
    <property type="entry name" value="Malonyl_transacylase_ACP-bd"/>
</dbReference>
<dbReference type="InterPro" id="IPR036291">
    <property type="entry name" value="NAD(P)-bd_dom_sf"/>
</dbReference>
<dbReference type="InterPro" id="IPR056501">
    <property type="entry name" value="NAD-bd_HRPKS_sdrA"/>
</dbReference>
<dbReference type="InterPro" id="IPR032821">
    <property type="entry name" value="PKS_assoc"/>
</dbReference>
<dbReference type="InterPro" id="IPR020841">
    <property type="entry name" value="PKS_Beta-ketoAc_synthase_dom"/>
</dbReference>
<dbReference type="InterPro" id="IPR042104">
    <property type="entry name" value="PKS_dehydratase_sf"/>
</dbReference>
<dbReference type="InterPro" id="IPR020807">
    <property type="entry name" value="PKS_DH"/>
</dbReference>
<dbReference type="InterPro" id="IPR049551">
    <property type="entry name" value="PKS_DH_C"/>
</dbReference>
<dbReference type="InterPro" id="IPR049552">
    <property type="entry name" value="PKS_DH_N"/>
</dbReference>
<dbReference type="InterPro" id="IPR020843">
    <property type="entry name" value="PKS_ER"/>
</dbReference>
<dbReference type="InterPro" id="IPR013968">
    <property type="entry name" value="PKS_KR"/>
</dbReference>
<dbReference type="InterPro" id="IPR049900">
    <property type="entry name" value="PKS_mFAS_DH"/>
</dbReference>
<dbReference type="InterPro" id="IPR050091">
    <property type="entry name" value="PKS_NRPS_Biosynth_Enz"/>
</dbReference>
<dbReference type="InterPro" id="IPR009081">
    <property type="entry name" value="PP-bd_ACP"/>
</dbReference>
<dbReference type="InterPro" id="IPR016039">
    <property type="entry name" value="Thiolase-like"/>
</dbReference>
<dbReference type="PANTHER" id="PTHR43775">
    <property type="entry name" value="FATTY ACID SYNTHASE"/>
    <property type="match status" value="1"/>
</dbReference>
<dbReference type="PANTHER" id="PTHR43775:SF50">
    <property type="entry name" value="HIGHLY REDUCING POLYKETIDE SYNTHASE SRDA"/>
    <property type="match status" value="1"/>
</dbReference>
<dbReference type="Pfam" id="PF00698">
    <property type="entry name" value="Acyl_transf_1"/>
    <property type="match status" value="1"/>
</dbReference>
<dbReference type="Pfam" id="PF08240">
    <property type="entry name" value="ADH_N"/>
    <property type="match status" value="1"/>
</dbReference>
<dbReference type="Pfam" id="PF00107">
    <property type="entry name" value="ADH_zinc_N"/>
    <property type="match status" value="1"/>
</dbReference>
<dbReference type="Pfam" id="PF16197">
    <property type="entry name" value="KAsynt_C_assoc"/>
    <property type="match status" value="1"/>
</dbReference>
<dbReference type="Pfam" id="PF00109">
    <property type="entry name" value="ketoacyl-synt"/>
    <property type="match status" value="1"/>
</dbReference>
<dbReference type="Pfam" id="PF02801">
    <property type="entry name" value="Ketoacyl-synt_C"/>
    <property type="match status" value="1"/>
</dbReference>
<dbReference type="Pfam" id="PF08659">
    <property type="entry name" value="KR"/>
    <property type="match status" value="1"/>
</dbReference>
<dbReference type="Pfam" id="PF23114">
    <property type="entry name" value="NAD-bd_HRPKS_sdrA"/>
    <property type="match status" value="1"/>
</dbReference>
<dbReference type="Pfam" id="PF21089">
    <property type="entry name" value="PKS_DH_N"/>
    <property type="match status" value="1"/>
</dbReference>
<dbReference type="Pfam" id="PF00550">
    <property type="entry name" value="PP-binding"/>
    <property type="match status" value="1"/>
</dbReference>
<dbReference type="Pfam" id="PF14765">
    <property type="entry name" value="PS-DH"/>
    <property type="match status" value="1"/>
</dbReference>
<dbReference type="SMART" id="SM00827">
    <property type="entry name" value="PKS_AT"/>
    <property type="match status" value="1"/>
</dbReference>
<dbReference type="SMART" id="SM00826">
    <property type="entry name" value="PKS_DH"/>
    <property type="match status" value="1"/>
</dbReference>
<dbReference type="SMART" id="SM00829">
    <property type="entry name" value="PKS_ER"/>
    <property type="match status" value="1"/>
</dbReference>
<dbReference type="SMART" id="SM00822">
    <property type="entry name" value="PKS_KR"/>
    <property type="match status" value="1"/>
</dbReference>
<dbReference type="SMART" id="SM00825">
    <property type="entry name" value="PKS_KS"/>
    <property type="match status" value="1"/>
</dbReference>
<dbReference type="SUPFAM" id="SSF47336">
    <property type="entry name" value="ACP-like"/>
    <property type="match status" value="1"/>
</dbReference>
<dbReference type="SUPFAM" id="SSF52151">
    <property type="entry name" value="FabD/lysophospholipase-like"/>
    <property type="match status" value="1"/>
</dbReference>
<dbReference type="SUPFAM" id="SSF50129">
    <property type="entry name" value="GroES-like"/>
    <property type="match status" value="1"/>
</dbReference>
<dbReference type="SUPFAM" id="SSF51735">
    <property type="entry name" value="NAD(P)-binding Rossmann-fold domains"/>
    <property type="match status" value="3"/>
</dbReference>
<dbReference type="SUPFAM" id="SSF55048">
    <property type="entry name" value="Probable ACP-binding domain of malonyl-CoA ACP transacylase"/>
    <property type="match status" value="1"/>
</dbReference>
<dbReference type="SUPFAM" id="SSF53901">
    <property type="entry name" value="Thiolase-like"/>
    <property type="match status" value="1"/>
</dbReference>
<dbReference type="PROSITE" id="PS52004">
    <property type="entry name" value="KS3_2"/>
    <property type="match status" value="1"/>
</dbReference>
<dbReference type="PROSITE" id="PS52019">
    <property type="entry name" value="PKS_MFAS_DH"/>
    <property type="match status" value="1"/>
</dbReference>
<feature type="chain" id="PRO_0000444646" description="Reducing polyketide synthase BOA9">
    <location>
        <begin position="1"/>
        <end position="2294"/>
    </location>
</feature>
<feature type="domain" description="Ketosynthase family 3 (KS3)" evidence="3 9 10">
    <location>
        <begin position="4"/>
        <end position="409"/>
    </location>
</feature>
<feature type="domain" description="PKS/mFAS DH" evidence="4">
    <location>
        <begin position="930"/>
        <end position="1236"/>
    </location>
</feature>
<feature type="domain" description="Carrier" evidence="2">
    <location>
        <begin position="2214"/>
        <end position="2292"/>
    </location>
</feature>
<feature type="region of interest" description="Malonyl-CoA:ACP transacylase (MAT) domain" evidence="1 9 10">
    <location>
        <begin position="537"/>
        <end position="853"/>
    </location>
</feature>
<feature type="region of interest" description="Dehydratase (DH) domain" evidence="1 9 10">
    <location>
        <begin position="930"/>
        <end position="1104"/>
    </location>
</feature>
<feature type="region of interest" description="N-terminal hotdog fold" evidence="4">
    <location>
        <begin position="930"/>
        <end position="1067"/>
    </location>
</feature>
<feature type="region of interest" description="C-terminal hotdog fold" evidence="4">
    <location>
        <begin position="1078"/>
        <end position="1236"/>
    </location>
</feature>
<feature type="region of interest" description="Enoyl reductase (ER) domain" evidence="1 9 10">
    <location>
        <begin position="1618"/>
        <end position="1908"/>
    </location>
</feature>
<feature type="region of interest" description="Ketoreductase (KR) domain" evidence="1 9 10">
    <location>
        <begin position="1934"/>
        <end position="2107"/>
    </location>
</feature>
<feature type="active site" description="For malonyltransferase activity" evidence="5">
    <location>
        <position position="630"/>
    </location>
</feature>
<feature type="active site" description="Proton acceptor; for dehydratase activity" evidence="4">
    <location>
        <position position="962"/>
    </location>
</feature>
<feature type="active site" description="Proton donor; for dehydratase activity" evidence="4">
    <location>
        <position position="1142"/>
    </location>
</feature>
<feature type="modified residue" description="O-(pantetheine 4'-phosphoryl)serine" evidence="2">
    <location>
        <position position="2251"/>
    </location>
</feature>
<proteinExistence type="evidence at transcript level"/>
<keyword id="KW-0012">Acyltransferase</keyword>
<keyword id="KW-0511">Multifunctional enzyme</keyword>
<keyword id="KW-0521">NADP</keyword>
<keyword id="KW-0560">Oxidoreductase</keyword>
<keyword id="KW-0596">Phosphopantetheine</keyword>
<keyword id="KW-0597">Phosphoprotein</keyword>
<keyword id="KW-0808">Transferase</keyword>
<keyword id="KW-0843">Virulence</keyword>
<sequence>MSFPEPVAIIGMGCRFPGDSDTPDEFWKMLAEERSGLSRPPLSRWNIDGFHANKARPGSLTPEGGYFINEDIWKFDPAFFGIVQEEAKAMDPQQRKLLECVYESFESGGITLSQLSGSNTGCYIGNFTSDYYLQGHRDHNNPKPYSLLGSGYTIISNRVSYLFDLCGPRALQTKEIDAAVVGGTNLMLAVETQMSTDKVGVLSATSTCHTFDESADGYGRAEGVGAIFLKRLSDAIRDNDPIRGVIRGTATNANGKTSGITQPSAKGHETVMRTAYEFAGLDPRDTSYFETHGTGTQVGDPIEIKGVGNFFFNGTDRQKLLVGSVKTNVGHSEAASALASIIKVCLAMEKRTIPATIGIKKLNPKIDFKGGRIEVVQKMTPWPKGFSVCRASINSFGYGGANATAIVEAADSVLPGKLTYTRRGQDERDLEASSEESESVEMVGTKSASQVRAVSRSEFLLLFSAHDISTLKSNIERCRDVAEDYNILDLAYTLGCRRSNFFNCAYTVAREDDVEEDLMEHEITFGKRGNGGNIGFIFTGQGAQNAQMGRELMLTFPSYIDTIRKLDRSLQSLGDDSPDWTIEDVLMEPAVTSKINDVEISQPVCTAVQIALVELLRLWNVTPVACIGHSSGEIASSYAANLIPAEEAIISAFYRGRGVGTLKVKGTMLAVGAGPEEIQPYLTDGLRIACYNSPNSVTLSGDIEPATIVQKKLESDRVFVRELKTGGRAYHSHHMLNIGNDYESRLSEALSRFGASQTTNQAQVQNPVFFSSVTAQQMPSNFKPGPSYWRQNLESPVRFTEAVEAALAADLGISQFVEIGPHSALAGPLRQIRDNLGITPKDLDYAATLVRGQSSVTRLLDLAGTLTMRGFSVNVERVNAIEKREGGAIITKTGLPIVDLPRFSWNYSAGEIRNKNRPDEEHRLRKFKYHDLLGAILPGSSVEQRQWRNMLDSKNFPWLEEHKLGPQPVLPGTGYLAIATEAARQFFHDKLTVSGAFRYFFPNISITSALNIPPSGSQVEIVTTMKFATITASITSKTIAEFTISSIQAGNWTNHCVGTVTKKKAVTMAPRFDESKLQEPKAARTWYRGFQKVSLNYGPAFNGLSNIRTNPALEEAVADTELCPDGVSEHDSAYIVHPAAMDTCIQVALIGAHKGSLAGLKRSFVPTSMANVSLWSWADDDHITQLTPGKGKVLAHAEFFSLRAMNGWCQLFSPEGKPLFEIEELSCTQYSEALDDLGTIDRHPYLRTVWKPDVDKMVSNLTDNSLLDLIVHKRPGFNICEILNTESMISDNLHRVLESGSSLRRYKTYTVMALGDVDIEPIKVKYEAFPGVVVQKLVLDDVPETFFDLLIVPQFPSDEIDLAKLKGLLTPGGNMLLYSSEFKNGNTIKTDLQLAGLYTLLEDKESLLISPHQRTSSDLPAGEIVLVTRTSPTVFDSHIFSGLSKSGRLITSISLQDFKFHAHTKATYVFIVESESSIFHGSLTSQELATIQSVASGATNMLWVTHGNLLEGDDPNAGIVIGLGRCLQTEHPTLTFKTLDLDHRDPIQTISNITTILNAADSGDEDKEFMVKNGIFYVSRLSQDPLLDQQFVSGVESEPKMIPYEPEKRIRLGIERVGIFDTIHFKDDELEASLKPGEVEVDVKAVGLNMKDFATLQGTYNSEILGLEGAGIVRSIGTGVTNVAIGDRKLKPEETLDQMSSIMMPFLTAIYGLIYLAKLQPGESVLINSATGGVGLAAIQIAKMIGAEIFATVGTPEKKKFLMQEYGLQDDHVLSSKDASFAAEIMQTTGGRGVDVSLNSLVREQLRATWNCIGHHGRHIELGQTDILDQGILDMSPFKRGASFIAMDLVLVFEHKPDLISQILGEIMHYYRDCKIQPLPNLSVFPVSAIGKAFEEFGKNSRIGRVVVSFDTETINTRLSLRRRRSQLLSSQMVHTYLLGVLEALVDVWLVTWLKKGARHLIFLGRSGEDRPEAASMIKDFRNDGITVDVVKGDVTRISDVQKAVDLAAGPLFGVVQGVMALDDRLFTSHDLNSWEYAVRPKVTGTWNLHNAVASHSLDFFVMLGSSSALSGFPTQSNYCAGNSFLEFFARYRQSKGLPATTISLTVVTEVGFVSQNERIEDGLARTGVHTINEAGVIDLIDTAMMKAPSSSWNLDPLANSFIVTGVEPLQLSANLDIDSIPFWRQPRIGPVFNAVLAKKSGNETGPGQNKRRLLLPDILEMIIEKFSQTFNVAVEDIDPGTEIVRFGMDSMIGTSLRTWCYKTLGADIAASDFMSLNLTADSLAKKIYDIRKG</sequence>
<protein>
    <recommendedName>
        <fullName evidence="8">Reducing polyketide synthase BOA9</fullName>
        <ecNumber evidence="9">2.3.1.-</ecNumber>
    </recommendedName>
    <alternativeName>
        <fullName evidence="8">Botcinic acid biosynthesis cluster B protein 9</fullName>
    </alternativeName>
</protein>
<gene>
    <name evidence="8" type="primary">BOA9</name>
</gene>
<accession>G0LET7</accession>
<organism>
    <name type="scientific">Botryotinia fuckeliana (strain B05.10)</name>
    <name type="common">Noble rot fungus</name>
    <name type="synonym">Botrytis cinerea</name>
    <dbReference type="NCBI Taxonomy" id="332648"/>
    <lineage>
        <taxon>Eukaryota</taxon>
        <taxon>Fungi</taxon>
        <taxon>Dikarya</taxon>
        <taxon>Ascomycota</taxon>
        <taxon>Pezizomycotina</taxon>
        <taxon>Leotiomycetes</taxon>
        <taxon>Helotiales</taxon>
        <taxon>Sclerotiniaceae</taxon>
        <taxon>Botrytis</taxon>
    </lineage>
</organism>
<reference key="1">
    <citation type="journal article" date="2011" name="Mol. Plant Pathol.">
        <title>The Botrytis cinerea phytotoxin botcinic acid requires two polyketide synthases for production and has a redundant role in virulence with botrydial.</title>
        <authorList>
            <person name="Dalmais B."/>
            <person name="Schumacher J."/>
            <person name="Moraga J."/>
            <person name="Le Pecheur P."/>
            <person name="Tudzynski B."/>
            <person name="Collado I.G."/>
            <person name="Viaud M."/>
        </authorList>
    </citation>
    <scope>NUCLEOTIDE SEQUENCE [GENOMIC DNA]</scope>
    <scope>FUNCTION</scope>
    <scope>INDUCTION</scope>
    <scope>DOMAIN</scope>
    <scope>DISRUPTION PHENOTYPE</scope>
    <scope>PATHWAY</scope>
    <source>
        <strain>B05.10</strain>
    </source>
</reference>
<reference key="2">
    <citation type="journal article" date="2013" name="ChemBioChem">
        <title>A shared biosynthetic pathway for botcinins and botrylactones revealed through gene deletions.</title>
        <authorList>
            <person name="Massaroli M."/>
            <person name="Moraga J."/>
            <person name="Bastos Borges K."/>
            <person name="Ramirez-Fernandez J."/>
            <person name="Viaud M."/>
            <person name="Gonzalez Collado I."/>
            <person name="Duran-Patron R."/>
            <person name="Hernandez-Galan R."/>
        </authorList>
    </citation>
    <scope>FUNCTION</scope>
    <scope>DOMAIN</scope>
    <scope>PATHWAY</scope>
</reference>
<evidence type="ECO:0000255" key="1"/>
<evidence type="ECO:0000255" key="2">
    <source>
        <dbReference type="PROSITE-ProRule" id="PRU00258"/>
    </source>
</evidence>
<evidence type="ECO:0000255" key="3">
    <source>
        <dbReference type="PROSITE-ProRule" id="PRU01348"/>
    </source>
</evidence>
<evidence type="ECO:0000255" key="4">
    <source>
        <dbReference type="PROSITE-ProRule" id="PRU01363"/>
    </source>
</evidence>
<evidence type="ECO:0000255" key="5">
    <source>
        <dbReference type="PROSITE-ProRule" id="PRU10022"/>
    </source>
</evidence>
<evidence type="ECO:0000269" key="6">
    <source>
    </source>
</evidence>
<evidence type="ECO:0000269" key="7">
    <source>
    </source>
</evidence>
<evidence type="ECO:0000303" key="8">
    <source>
    </source>
</evidence>
<evidence type="ECO:0000305" key="9">
    <source>
    </source>
</evidence>
<evidence type="ECO:0000305" key="10">
    <source>
    </source>
</evidence>
<name>BOA9_BOTFB</name>
<comment type="function">
    <text evidence="6 7 10">Reducing polyketide synthase; part of the gene cluster B that mediates the biosynthesis of botcinic acid and its botcinin derivatives, acetate-derived polyketides that contribute to virulence when combined with the sesquiterpene botrydial (PubMed:21722295). Botcinic acid and its derivatives have been shown to induce chlorosis and necrosis during host plant infection, but also have antifungal activities (PubMed:21722295). Two polyketide synthases, BOA6 and BOA9, are involved in the biosynthesis of botcinins. BOA6 mediates the formation of the per-methylated tetraketide core by condensation of four units of malonyl-CoA with one unit of acetyl-CoA, which would be methylated in activated methylene groups to yield a bicyclic acid intermediate that could then either be converted to botrylactone derivatives or lose the starter acetate unit through a retro-Claisen type C-C bond cleavage to yield botcinin derivatives (PubMed:23203902). The second polyketide synthase, BOA9, is probably required for the biosynthesis of the tetraketide side chain of botcinins (Probable). The methyltransferase (MT) domain within BOA6 is probably responsible for the incorporation of four methyl groups (Probable). The trans-enoyl reductase BOA5 might take over the enoyl reductase function of BOA6 that misses an ER domain (Probable). The monooxygenases BOA2, BOA3 and BOA4 might be involved in further hydroxylations at C4, C5 and C8, whereas BOA7, close to BOA9, could potentially be involved in the hydroxylation at C4 in the side chain of botcinins (Probable).</text>
</comment>
<comment type="pathway">
    <text evidence="6 10">Polyketide biosynthesis.</text>
</comment>
<comment type="induction">
    <text evidence="6">Expression is up-regulated during tomato leaf infection (PubMed:21722295). Expression of the botcinic acid clusters genes BOA1-13 and BOA17 is coregulated by BCG1 during both in vitro and in planta growth (PubMed:21722295).</text>
</comment>
<comment type="domain">
    <text evidence="9 10">Multidomain protein; including a ketosynthase (KS) that catalyzes repeated decarboxylative condensation to elongate the polyketide backbone; a malonyl-CoA:ACP transacylase (MAT) that selects and transfers the extender unit malonyl-CoA; a dehydratase (DH) domain that reduces hydroxyl groups to enoyl groups; an enoyl reductase (ER) domain that reduces enoyl groups to alkyl group; a ketoreductase (KR) domain that catalyzes beta-ketoreduction steps; and an acyl-carrier protein (ACP) that serves as the tether of the growing and completed polyketide via its phosphopantetheinyl arm.</text>
</comment>
<comment type="disruption phenotype">
    <text evidence="6">Abolishes botcinic acid and botcinin production.</text>
</comment>